<sequence length="169" mass="19326">MILGLALIPSKSFQEAVDSYRKRYDKQYSRIKPHVTIKAPFEIKDGDLDSVIEQVRARINGIPAVEVHATKASSFKPTNNVIYFKVAKTDDLEELFNRFNGEDFYGEAEHVFVPHFTIAQGLSSQEFEDIFGQVALAGVDHKEIIDELTLLRFDDDEDKWKVIETFKLA</sequence>
<organism>
    <name type="scientific">Staphylococcus aureus (strain USA300)</name>
    <dbReference type="NCBI Taxonomy" id="367830"/>
    <lineage>
        <taxon>Bacteria</taxon>
        <taxon>Bacillati</taxon>
        <taxon>Bacillota</taxon>
        <taxon>Bacilli</taxon>
        <taxon>Bacillales</taxon>
        <taxon>Staphylococcaceae</taxon>
        <taxon>Staphylococcus</taxon>
    </lineage>
</organism>
<keyword id="KW-0378">Hydrolase</keyword>
<name>Y916_STAA3</name>
<evidence type="ECO:0000255" key="1">
    <source>
        <dbReference type="HAMAP-Rule" id="MF_01444"/>
    </source>
</evidence>
<protein>
    <recommendedName>
        <fullName evidence="1">Putative phosphoesterase SAUSA300_0916</fullName>
        <ecNumber evidence="1">3.1.-.-</ecNumber>
    </recommendedName>
</protein>
<gene>
    <name type="ordered locus">SAUSA300_0916</name>
</gene>
<comment type="similarity">
    <text evidence="1">Belongs to the 2H phosphoesterase superfamily. YjcG family.</text>
</comment>
<dbReference type="EC" id="3.1.-.-" evidence="1"/>
<dbReference type="EMBL" id="CP000255">
    <property type="protein sequence ID" value="ABD21526.1"/>
    <property type="molecule type" value="Genomic_DNA"/>
</dbReference>
<dbReference type="RefSeq" id="WP_000600392.1">
    <property type="nucleotide sequence ID" value="NZ_CP027476.1"/>
</dbReference>
<dbReference type="SMR" id="Q2FI62"/>
<dbReference type="KEGG" id="saa:SAUSA300_0916"/>
<dbReference type="HOGENOM" id="CLU_132020_0_0_9"/>
<dbReference type="OMA" id="RELQFPY"/>
<dbReference type="Proteomes" id="UP000001939">
    <property type="component" value="Chromosome"/>
</dbReference>
<dbReference type="GO" id="GO:0016788">
    <property type="term" value="F:hydrolase activity, acting on ester bonds"/>
    <property type="evidence" value="ECO:0007669"/>
    <property type="project" value="UniProtKB-UniRule"/>
</dbReference>
<dbReference type="Gene3D" id="3.90.1140.10">
    <property type="entry name" value="Cyclic phosphodiesterase"/>
    <property type="match status" value="1"/>
</dbReference>
<dbReference type="HAMAP" id="MF_01444">
    <property type="entry name" value="2H_phosphoesterase_YjcG"/>
    <property type="match status" value="1"/>
</dbReference>
<dbReference type="InterPro" id="IPR050580">
    <property type="entry name" value="2H_phosphoesterase_YjcG-like"/>
</dbReference>
<dbReference type="InterPro" id="IPR009097">
    <property type="entry name" value="Cyclic_Pdiesterase"/>
</dbReference>
<dbReference type="InterPro" id="IPR022932">
    <property type="entry name" value="YjcG"/>
</dbReference>
<dbReference type="NCBIfam" id="NF010223">
    <property type="entry name" value="PRK13679.1"/>
    <property type="match status" value="1"/>
</dbReference>
<dbReference type="PANTHER" id="PTHR40037:SF1">
    <property type="entry name" value="PHOSPHOESTERASE SAOUHSC_00951-RELATED"/>
    <property type="match status" value="1"/>
</dbReference>
<dbReference type="PANTHER" id="PTHR40037">
    <property type="entry name" value="PHOSPHOESTERASE YJCG-RELATED"/>
    <property type="match status" value="1"/>
</dbReference>
<dbReference type="Pfam" id="PF13563">
    <property type="entry name" value="2_5_RNA_ligase2"/>
    <property type="match status" value="1"/>
</dbReference>
<dbReference type="SUPFAM" id="SSF55144">
    <property type="entry name" value="LigT-like"/>
    <property type="match status" value="1"/>
</dbReference>
<feature type="chain" id="PRO_0000299345" description="Putative phosphoesterase SAUSA300_0916">
    <location>
        <begin position="1"/>
        <end position="169"/>
    </location>
</feature>
<feature type="short sequence motif" description="HXTX 1" evidence="1">
    <location>
        <begin position="34"/>
        <end position="37"/>
    </location>
</feature>
<feature type="short sequence motif" description="HXTX 2" evidence="1">
    <location>
        <begin position="115"/>
        <end position="118"/>
    </location>
</feature>
<feature type="active site" description="Proton donor" evidence="1">
    <location>
        <position position="34"/>
    </location>
</feature>
<feature type="active site" description="Proton acceptor" evidence="1">
    <location>
        <position position="115"/>
    </location>
</feature>
<reference key="1">
    <citation type="journal article" date="2006" name="Lancet">
        <title>Complete genome sequence of USA300, an epidemic clone of community-acquired meticillin-resistant Staphylococcus aureus.</title>
        <authorList>
            <person name="Diep B.A."/>
            <person name="Gill S.R."/>
            <person name="Chang R.F."/>
            <person name="Phan T.H."/>
            <person name="Chen J.H."/>
            <person name="Davidson M.G."/>
            <person name="Lin F."/>
            <person name="Lin J."/>
            <person name="Carleton H.A."/>
            <person name="Mongodin E.F."/>
            <person name="Sensabaugh G.F."/>
            <person name="Perdreau-Remington F."/>
        </authorList>
    </citation>
    <scope>NUCLEOTIDE SEQUENCE [LARGE SCALE GENOMIC DNA]</scope>
    <source>
        <strain>USA300</strain>
    </source>
</reference>
<proteinExistence type="inferred from homology"/>
<accession>Q2FI62</accession>